<protein>
    <recommendedName>
        <fullName evidence="1">Ribose-5-phosphate isomerase A</fullName>
        <ecNumber evidence="1">5.3.1.6</ecNumber>
    </recommendedName>
    <alternativeName>
        <fullName evidence="1">Phosphoriboisomerase A</fullName>
        <shortName evidence="1">PRI</shortName>
    </alternativeName>
</protein>
<keyword id="KW-0413">Isomerase</keyword>
<accession>Q02VQ6</accession>
<feature type="chain" id="PRO_1000016943" description="Ribose-5-phosphate isomerase A">
    <location>
        <begin position="1"/>
        <end position="224"/>
    </location>
</feature>
<feature type="active site" description="Proton acceptor" evidence="1">
    <location>
        <position position="104"/>
    </location>
</feature>
<feature type="binding site" evidence="1">
    <location>
        <begin position="26"/>
        <end position="29"/>
    </location>
    <ligand>
        <name>substrate</name>
    </ligand>
</feature>
<feature type="binding site" evidence="1">
    <location>
        <begin position="82"/>
        <end position="85"/>
    </location>
    <ligand>
        <name>substrate</name>
    </ligand>
</feature>
<feature type="binding site" evidence="1">
    <location>
        <begin position="95"/>
        <end position="98"/>
    </location>
    <ligand>
        <name>substrate</name>
    </ligand>
</feature>
<feature type="binding site" evidence="1">
    <location>
        <position position="122"/>
    </location>
    <ligand>
        <name>substrate</name>
    </ligand>
</feature>
<name>RPIA_LACLS</name>
<sequence>MENLKKQVGIKAAEFVKSGMVVGLGTGSTAAYFVEELGRRVAEEQLEITGVTTSSVTSEQAKALGIPLASIDEVDYVDLTVDGADEIDSHLNGIKGGGAALLMEKIVATYSKDYIWIVDESKLSENLGSFKVPVEVIRYGSEQLFKEFERAAYAPTWRLNEEGEKLITDMQHFIIDLHIAKIENPQKLADELDLMVGVVEHGLFNDMVKKVIVAGSDGVKIISQ</sequence>
<reference key="1">
    <citation type="journal article" date="2006" name="Proc. Natl. Acad. Sci. U.S.A.">
        <title>Comparative genomics of the lactic acid bacteria.</title>
        <authorList>
            <person name="Makarova K.S."/>
            <person name="Slesarev A."/>
            <person name="Wolf Y.I."/>
            <person name="Sorokin A."/>
            <person name="Mirkin B."/>
            <person name="Koonin E.V."/>
            <person name="Pavlov A."/>
            <person name="Pavlova N."/>
            <person name="Karamychev V."/>
            <person name="Polouchine N."/>
            <person name="Shakhova V."/>
            <person name="Grigoriev I."/>
            <person name="Lou Y."/>
            <person name="Rohksar D."/>
            <person name="Lucas S."/>
            <person name="Huang K."/>
            <person name="Goodstein D.M."/>
            <person name="Hawkins T."/>
            <person name="Plengvidhya V."/>
            <person name="Welker D."/>
            <person name="Hughes J."/>
            <person name="Goh Y."/>
            <person name="Benson A."/>
            <person name="Baldwin K."/>
            <person name="Lee J.-H."/>
            <person name="Diaz-Muniz I."/>
            <person name="Dosti B."/>
            <person name="Smeianov V."/>
            <person name="Wechter W."/>
            <person name="Barabote R."/>
            <person name="Lorca G."/>
            <person name="Altermann E."/>
            <person name="Barrangou R."/>
            <person name="Ganesan B."/>
            <person name="Xie Y."/>
            <person name="Rawsthorne H."/>
            <person name="Tamir D."/>
            <person name="Parker C."/>
            <person name="Breidt F."/>
            <person name="Broadbent J.R."/>
            <person name="Hutkins R."/>
            <person name="O'Sullivan D."/>
            <person name="Steele J."/>
            <person name="Unlu G."/>
            <person name="Saier M.H. Jr."/>
            <person name="Klaenhammer T."/>
            <person name="Richardson P."/>
            <person name="Kozyavkin S."/>
            <person name="Weimer B.C."/>
            <person name="Mills D.A."/>
        </authorList>
    </citation>
    <scope>NUCLEOTIDE SEQUENCE [LARGE SCALE GENOMIC DNA]</scope>
    <source>
        <strain>SK11</strain>
    </source>
</reference>
<dbReference type="EC" id="5.3.1.6" evidence="1"/>
<dbReference type="EMBL" id="CP000425">
    <property type="protein sequence ID" value="ABJ73966.1"/>
    <property type="molecule type" value="Genomic_DNA"/>
</dbReference>
<dbReference type="RefSeq" id="WP_011677274.1">
    <property type="nucleotide sequence ID" value="NC_008527.1"/>
</dbReference>
<dbReference type="SMR" id="Q02VQ6"/>
<dbReference type="KEGG" id="llc:LACR_2538"/>
<dbReference type="HOGENOM" id="CLU_056590_1_0_9"/>
<dbReference type="UniPathway" id="UPA00115">
    <property type="reaction ID" value="UER00412"/>
</dbReference>
<dbReference type="Proteomes" id="UP000000240">
    <property type="component" value="Chromosome"/>
</dbReference>
<dbReference type="GO" id="GO:0004751">
    <property type="term" value="F:ribose-5-phosphate isomerase activity"/>
    <property type="evidence" value="ECO:0007669"/>
    <property type="project" value="UniProtKB-UniRule"/>
</dbReference>
<dbReference type="GO" id="GO:0009052">
    <property type="term" value="P:pentose-phosphate shunt, non-oxidative branch"/>
    <property type="evidence" value="ECO:0007669"/>
    <property type="project" value="UniProtKB-UniRule"/>
</dbReference>
<dbReference type="CDD" id="cd01398">
    <property type="entry name" value="RPI_A"/>
    <property type="match status" value="1"/>
</dbReference>
<dbReference type="FunFam" id="3.40.50.1360:FF:000001">
    <property type="entry name" value="Ribose-5-phosphate isomerase A"/>
    <property type="match status" value="1"/>
</dbReference>
<dbReference type="Gene3D" id="3.30.70.260">
    <property type="match status" value="1"/>
</dbReference>
<dbReference type="Gene3D" id="3.40.50.1360">
    <property type="match status" value="1"/>
</dbReference>
<dbReference type="HAMAP" id="MF_00170">
    <property type="entry name" value="Rib_5P_isom_A"/>
    <property type="match status" value="1"/>
</dbReference>
<dbReference type="InterPro" id="IPR037171">
    <property type="entry name" value="NagB/RpiA_transferase-like"/>
</dbReference>
<dbReference type="InterPro" id="IPR050262">
    <property type="entry name" value="Ribose-5P_isomerase"/>
</dbReference>
<dbReference type="InterPro" id="IPR020672">
    <property type="entry name" value="Ribose5P_isomerase_typA_subgr"/>
</dbReference>
<dbReference type="InterPro" id="IPR004788">
    <property type="entry name" value="Ribose5P_isomerase_type_A"/>
</dbReference>
<dbReference type="NCBIfam" id="NF001924">
    <property type="entry name" value="PRK00702.1"/>
    <property type="match status" value="1"/>
</dbReference>
<dbReference type="NCBIfam" id="TIGR00021">
    <property type="entry name" value="rpiA"/>
    <property type="match status" value="1"/>
</dbReference>
<dbReference type="PANTHER" id="PTHR43748">
    <property type="entry name" value="RIBOSE-5-PHOSPHATE ISOMERASE 3, CHLOROPLASTIC-RELATED"/>
    <property type="match status" value="1"/>
</dbReference>
<dbReference type="PANTHER" id="PTHR43748:SF3">
    <property type="entry name" value="RIBOSE-5-PHOSPHATE ISOMERASE 3, CHLOROPLASTIC-RELATED"/>
    <property type="match status" value="1"/>
</dbReference>
<dbReference type="Pfam" id="PF06026">
    <property type="entry name" value="Rib_5-P_isom_A"/>
    <property type="match status" value="1"/>
</dbReference>
<dbReference type="SUPFAM" id="SSF75445">
    <property type="entry name" value="D-ribose-5-phosphate isomerase (RpiA), lid domain"/>
    <property type="match status" value="1"/>
</dbReference>
<dbReference type="SUPFAM" id="SSF100950">
    <property type="entry name" value="NagB/RpiA/CoA transferase-like"/>
    <property type="match status" value="1"/>
</dbReference>
<comment type="function">
    <text evidence="1">Catalyzes the reversible conversion of ribose-5-phosphate to ribulose 5-phosphate.</text>
</comment>
<comment type="catalytic activity">
    <reaction evidence="1">
        <text>aldehydo-D-ribose 5-phosphate = D-ribulose 5-phosphate</text>
        <dbReference type="Rhea" id="RHEA:14657"/>
        <dbReference type="ChEBI" id="CHEBI:58121"/>
        <dbReference type="ChEBI" id="CHEBI:58273"/>
        <dbReference type="EC" id="5.3.1.6"/>
    </reaction>
</comment>
<comment type="pathway">
    <text evidence="1">Carbohydrate degradation; pentose phosphate pathway; D-ribose 5-phosphate from D-ribulose 5-phosphate (non-oxidative stage): step 1/1.</text>
</comment>
<comment type="subunit">
    <text evidence="1">Homodimer.</text>
</comment>
<comment type="similarity">
    <text evidence="1">Belongs to the ribose 5-phosphate isomerase family.</text>
</comment>
<organism>
    <name type="scientific">Lactococcus lactis subsp. cremoris (strain SK11)</name>
    <dbReference type="NCBI Taxonomy" id="272622"/>
    <lineage>
        <taxon>Bacteria</taxon>
        <taxon>Bacillati</taxon>
        <taxon>Bacillota</taxon>
        <taxon>Bacilli</taxon>
        <taxon>Lactobacillales</taxon>
        <taxon>Streptococcaceae</taxon>
        <taxon>Lactococcus</taxon>
        <taxon>Lactococcus cremoris subsp. cremoris</taxon>
    </lineage>
</organism>
<evidence type="ECO:0000255" key="1">
    <source>
        <dbReference type="HAMAP-Rule" id="MF_00170"/>
    </source>
</evidence>
<gene>
    <name evidence="1" type="primary">rpiA</name>
    <name type="ordered locus">LACR_2538</name>
</gene>
<proteinExistence type="inferred from homology"/>